<name>SPT4H_MACFA</name>
<sequence length="117" mass="13193">MALETVPKDLRHLRACLLCSLVKTIDQFEYDGCDNCDAYLQMKGNREMVYDCTSSSFDGIIAMMSPEDSWVSKWQRVSNFKPGVYAVSVTGRLPQGIVRELKSRGVAYKSRDTAIKT</sequence>
<feature type="initiator methionine" description="Removed" evidence="2">
    <location>
        <position position="1"/>
    </location>
</feature>
<feature type="chain" id="PRO_0000210326" description="Transcription elongation factor SPT4">
    <location>
        <begin position="2"/>
        <end position="117"/>
    </location>
</feature>
<feature type="zinc finger region" description="C4-type" evidence="3">
    <location>
        <begin position="16"/>
        <end position="36"/>
    </location>
</feature>
<feature type="region of interest" description="Interaction with SUPT5H" evidence="1">
    <location>
        <begin position="2"/>
        <end position="40"/>
    </location>
</feature>
<feature type="binding site" evidence="2">
    <location>
        <position position="16"/>
    </location>
    <ligand>
        <name>Zn(2+)</name>
        <dbReference type="ChEBI" id="CHEBI:29105"/>
    </ligand>
</feature>
<feature type="binding site" evidence="2">
    <location>
        <position position="19"/>
    </location>
    <ligand>
        <name>Zn(2+)</name>
        <dbReference type="ChEBI" id="CHEBI:29105"/>
    </ligand>
</feature>
<feature type="binding site" evidence="2">
    <location>
        <position position="33"/>
    </location>
    <ligand>
        <name>Zn(2+)</name>
        <dbReference type="ChEBI" id="CHEBI:29105"/>
    </ligand>
</feature>
<feature type="binding site" evidence="2">
    <location>
        <position position="36"/>
    </location>
    <ligand>
        <name>Zn(2+)</name>
        <dbReference type="ChEBI" id="CHEBI:29105"/>
    </ligand>
</feature>
<feature type="modified residue" description="N-acetylalanine" evidence="2">
    <location>
        <position position="2"/>
    </location>
</feature>
<reference key="1">
    <citation type="submission" date="2005-06" db="EMBL/GenBank/DDBJ databases">
        <title>DNA sequences of macaque genes expressed in brain or testis and its evolutionary implications.</title>
        <authorList>
            <consortium name="International consortium for macaque cDNA sequencing and analysis"/>
        </authorList>
    </citation>
    <scope>NUCLEOTIDE SEQUENCE [LARGE SCALE MRNA]</scope>
    <source>
        <tissue>Testis</tissue>
    </source>
</reference>
<gene>
    <name type="primary">SUPT4H1</name>
    <name type="ORF">QtsA-10763</name>
</gene>
<comment type="function">
    <text evidence="1">Component of the DRB sensitivity-inducing factor complex (DSIF complex), which regulates mRNA processing and transcription elongation by RNA polymerase II. DSIF positively regulates mRNA capping by stimulating the mRNA guanylyltransferase activity of RNGTT/CAP1A. DSIF also acts cooperatively with the negative elongation factor complex (NELF complex) to enhance transcriptional pausing at sites proximal to the promoter. Transcriptional pausing may facilitate the assembly of an elongation competent RNA polymerase II complex. DSIF and NELF promote pausing by inhibition of the transcription elongation factor TFIIS/S-II. TFIIS/S-II binds to RNA polymerase II at transcription pause sites and stimulates the weak intrinsic nuclease activity of the enzyme. Cleavage of blocked transcripts by RNA polymerase II promotes the resumption of transcription from the new 3' terminus and may allow repeated attempts at transcription through natural pause sites (By similarity).</text>
</comment>
<comment type="subunit">
    <text evidence="1">Interacts with SUPT5H to form DSIF. DSIF interacts with the positive transcription elongation factor b complex (P-TEFb complex), which is composed of CDK9 and cyclin-T (CCNT1 or CCNT2). DSIF interacts with RNA polymerase II, and this interaction is reduced by phosphorylation of the C-terminal domain (CTD) of POLR2A by P-TEFb. DSIF also interacts with the NELF complex, which is composed of NELFA, NELFB, NELFD and NELFE, and this interaction occurs following prior binding of DSIF to RNA polymerase II. DSIF also interacts with PRMT1/HRMT1L2, HTATSF1/TATSF1, RNGTT/CAP1A, PRMT5/SKB1, SUPT6H, and can interact with PIN1 (By similarity).</text>
</comment>
<comment type="subcellular location">
    <subcellularLocation>
        <location evidence="1">Nucleus</location>
    </subcellularLocation>
</comment>
<comment type="PTM">
    <text evidence="2">Ubiquitinated by UBR5 when not assembled in the DSIF complex, leading to its degradation: UBR5 recognizes and binds a degron that is not accessible when SUPT4H1 is part of the DSIF complex.</text>
</comment>
<comment type="similarity">
    <text evidence="4">Belongs to the SPT4 family.</text>
</comment>
<proteinExistence type="evidence at protein level"/>
<organism>
    <name type="scientific">Macaca fascicularis</name>
    <name type="common">Crab-eating macaque</name>
    <name type="synonym">Cynomolgus monkey</name>
    <dbReference type="NCBI Taxonomy" id="9541"/>
    <lineage>
        <taxon>Eukaryota</taxon>
        <taxon>Metazoa</taxon>
        <taxon>Chordata</taxon>
        <taxon>Craniata</taxon>
        <taxon>Vertebrata</taxon>
        <taxon>Euteleostomi</taxon>
        <taxon>Mammalia</taxon>
        <taxon>Eutheria</taxon>
        <taxon>Euarchontoglires</taxon>
        <taxon>Primates</taxon>
        <taxon>Haplorrhini</taxon>
        <taxon>Catarrhini</taxon>
        <taxon>Cercopithecidae</taxon>
        <taxon>Cercopithecinae</taxon>
        <taxon>Macaca</taxon>
    </lineage>
</organism>
<dbReference type="EMBL" id="AB168256">
    <property type="protein sequence ID" value="BAE00380.1"/>
    <property type="molecule type" value="mRNA"/>
</dbReference>
<dbReference type="RefSeq" id="NP_001271726.1">
    <property type="nucleotide sequence ID" value="NM_001284797.1"/>
</dbReference>
<dbReference type="RefSeq" id="XP_045231029.1">
    <property type="nucleotide sequence ID" value="XM_045375094.2"/>
</dbReference>
<dbReference type="PDB" id="8A3Y">
    <property type="method" value="EM"/>
    <property type="resolution" value="3.30 A"/>
    <property type="chains" value="Y=1-117"/>
</dbReference>
<dbReference type="PDBsum" id="8A3Y"/>
<dbReference type="EMDB" id="EMD-15127"/>
<dbReference type="SMR" id="Q4R941"/>
<dbReference type="STRING" id="9541.ENSMFAP00000034767"/>
<dbReference type="Ensembl" id="ENSMFAT00000008997.2">
    <property type="protein sequence ID" value="ENSMFAP00000034767.1"/>
    <property type="gene ID" value="ENSMFAG00000003856.2"/>
</dbReference>
<dbReference type="GeneID" id="101925811"/>
<dbReference type="VEuPathDB" id="HostDB:ENSMFAG00000003856"/>
<dbReference type="eggNOG" id="KOG3490">
    <property type="taxonomic scope" value="Eukaryota"/>
</dbReference>
<dbReference type="GeneTree" id="ENSGT00390000018559"/>
<dbReference type="OMA" id="FDGMIAV"/>
<dbReference type="Proteomes" id="UP000233100">
    <property type="component" value="Chromosome 16"/>
</dbReference>
<dbReference type="Bgee" id="ENSMFAG00000003856">
    <property type="expression patterns" value="Expressed in bone marrow and 13 other cell types or tissues"/>
</dbReference>
<dbReference type="GO" id="GO:0032044">
    <property type="term" value="C:DSIF complex"/>
    <property type="evidence" value="ECO:0000250"/>
    <property type="project" value="UniProtKB"/>
</dbReference>
<dbReference type="GO" id="GO:0046982">
    <property type="term" value="F:protein heterodimerization activity"/>
    <property type="evidence" value="ECO:0007669"/>
    <property type="project" value="Ensembl"/>
</dbReference>
<dbReference type="GO" id="GO:0000993">
    <property type="term" value="F:RNA polymerase II complex binding"/>
    <property type="evidence" value="ECO:0007669"/>
    <property type="project" value="TreeGrafter"/>
</dbReference>
<dbReference type="GO" id="GO:0008270">
    <property type="term" value="F:zinc ion binding"/>
    <property type="evidence" value="ECO:0007669"/>
    <property type="project" value="UniProtKB-KW"/>
</dbReference>
<dbReference type="GO" id="GO:0000122">
    <property type="term" value="P:negative regulation of transcription by RNA polymerase II"/>
    <property type="evidence" value="ECO:0007669"/>
    <property type="project" value="Ensembl"/>
</dbReference>
<dbReference type="GO" id="GO:0034244">
    <property type="term" value="P:negative regulation of transcription elongation by RNA polymerase II"/>
    <property type="evidence" value="ECO:0007669"/>
    <property type="project" value="Ensembl"/>
</dbReference>
<dbReference type="GO" id="GO:0032786">
    <property type="term" value="P:positive regulation of DNA-templated transcription, elongation"/>
    <property type="evidence" value="ECO:0007669"/>
    <property type="project" value="Ensembl"/>
</dbReference>
<dbReference type="GO" id="GO:0045944">
    <property type="term" value="P:positive regulation of transcription by RNA polymerase II"/>
    <property type="evidence" value="ECO:0007669"/>
    <property type="project" value="Ensembl"/>
</dbReference>
<dbReference type="GO" id="GO:0140673">
    <property type="term" value="P:transcription elongation-coupled chromatin remodeling"/>
    <property type="evidence" value="ECO:0007669"/>
    <property type="project" value="InterPro"/>
</dbReference>
<dbReference type="CDD" id="cd07973">
    <property type="entry name" value="Spt4"/>
    <property type="match status" value="1"/>
</dbReference>
<dbReference type="FunFam" id="3.30.40.210:FF:000006">
    <property type="entry name" value="Transcription elongation factor SPT4"/>
    <property type="match status" value="1"/>
</dbReference>
<dbReference type="Gene3D" id="3.30.40.210">
    <property type="match status" value="1"/>
</dbReference>
<dbReference type="InterPro" id="IPR029040">
    <property type="entry name" value="RPABC4/Spt4"/>
</dbReference>
<dbReference type="InterPro" id="IPR009287">
    <property type="entry name" value="Spt4"/>
</dbReference>
<dbReference type="InterPro" id="IPR022800">
    <property type="entry name" value="Spt4/RpoE2_Znf"/>
</dbReference>
<dbReference type="InterPro" id="IPR038510">
    <property type="entry name" value="Spt4_sf"/>
</dbReference>
<dbReference type="PANTHER" id="PTHR12882">
    <property type="entry name" value="SUPPRESSOR OF TY 4"/>
    <property type="match status" value="1"/>
</dbReference>
<dbReference type="PANTHER" id="PTHR12882:SF1">
    <property type="entry name" value="TRANSCRIPTION ELONGATION FACTOR SPT4"/>
    <property type="match status" value="1"/>
</dbReference>
<dbReference type="Pfam" id="PF06093">
    <property type="entry name" value="Spt4"/>
    <property type="match status" value="1"/>
</dbReference>
<dbReference type="PIRSF" id="PIRSF025023">
    <property type="entry name" value="Spt4"/>
    <property type="match status" value="1"/>
</dbReference>
<dbReference type="SMART" id="SM01389">
    <property type="entry name" value="Spt4"/>
    <property type="match status" value="1"/>
</dbReference>
<dbReference type="SUPFAM" id="SSF63393">
    <property type="entry name" value="RNA polymerase subunits"/>
    <property type="match status" value="1"/>
</dbReference>
<keyword id="KW-0002">3D-structure</keyword>
<keyword id="KW-0007">Acetylation</keyword>
<keyword id="KW-0010">Activator</keyword>
<keyword id="KW-0479">Metal-binding</keyword>
<keyword id="KW-0539">Nucleus</keyword>
<keyword id="KW-1185">Reference proteome</keyword>
<keyword id="KW-0678">Repressor</keyword>
<keyword id="KW-0804">Transcription</keyword>
<keyword id="KW-0805">Transcription regulation</keyword>
<keyword id="KW-0832">Ubl conjugation</keyword>
<keyword id="KW-0862">Zinc</keyword>
<keyword id="KW-0863">Zinc-finger</keyword>
<accession>Q4R941</accession>
<protein>
    <recommendedName>
        <fullName>Transcription elongation factor SPT4</fullName>
    </recommendedName>
    <alternativeName>
        <fullName>DRB sensitivity-inducing factor small subunit</fullName>
        <shortName>DSIF small subunit</shortName>
    </alternativeName>
</protein>
<evidence type="ECO:0000250" key="1"/>
<evidence type="ECO:0000250" key="2">
    <source>
        <dbReference type="UniProtKB" id="P63272"/>
    </source>
</evidence>
<evidence type="ECO:0000255" key="3"/>
<evidence type="ECO:0000305" key="4"/>